<evidence type="ECO:0000250" key="1">
    <source>
        <dbReference type="UniProtKB" id="O95807"/>
    </source>
</evidence>
<evidence type="ECO:0000255" key="2"/>
<evidence type="ECO:0000305" key="3"/>
<accession>Q9CXL1</accession>
<keyword id="KW-0007">Acetylation</keyword>
<keyword id="KW-0472">Membrane</keyword>
<keyword id="KW-0597">Phosphoprotein</keyword>
<keyword id="KW-1185">Reference proteome</keyword>
<keyword id="KW-0812">Transmembrane</keyword>
<keyword id="KW-1133">Transmembrane helix</keyword>
<organism>
    <name type="scientific">Mus musculus</name>
    <name type="common">Mouse</name>
    <dbReference type="NCBI Taxonomy" id="10090"/>
    <lineage>
        <taxon>Eukaryota</taxon>
        <taxon>Metazoa</taxon>
        <taxon>Chordata</taxon>
        <taxon>Craniata</taxon>
        <taxon>Vertebrata</taxon>
        <taxon>Euteleostomi</taxon>
        <taxon>Mammalia</taxon>
        <taxon>Eutheria</taxon>
        <taxon>Euarchontoglires</taxon>
        <taxon>Glires</taxon>
        <taxon>Rodentia</taxon>
        <taxon>Myomorpha</taxon>
        <taxon>Muroidea</taxon>
        <taxon>Muridae</taxon>
        <taxon>Murinae</taxon>
        <taxon>Mus</taxon>
        <taxon>Mus</taxon>
    </lineage>
</organism>
<feature type="initiator methionine" description="Removed" evidence="1">
    <location>
        <position position="1"/>
    </location>
</feature>
<feature type="chain" id="PRO_0000174182" description="Transmembrane protein 50A">
    <location>
        <begin position="2"/>
        <end position="157"/>
    </location>
</feature>
<feature type="transmembrane region" description="Helical" evidence="2">
    <location>
        <begin position="26"/>
        <end position="46"/>
    </location>
</feature>
<feature type="transmembrane region" description="Helical" evidence="2">
    <location>
        <begin position="58"/>
        <end position="78"/>
    </location>
</feature>
<feature type="transmembrane region" description="Helical" evidence="2">
    <location>
        <begin position="95"/>
        <end position="115"/>
    </location>
</feature>
<feature type="transmembrane region" description="Helical" evidence="2">
    <location>
        <begin position="126"/>
        <end position="146"/>
    </location>
</feature>
<feature type="modified residue" description="N-acetylserine" evidence="1">
    <location>
        <position position="2"/>
    </location>
</feature>
<feature type="modified residue" description="Phosphoserine" evidence="1">
    <location>
        <position position="2"/>
    </location>
</feature>
<name>TM50A_MOUSE</name>
<comment type="subcellular location">
    <subcellularLocation>
        <location evidence="3">Membrane</location>
        <topology evidence="3">Multi-pass membrane protein</topology>
    </subcellularLocation>
</comment>
<comment type="similarity">
    <text evidence="3">Belongs to the UPF0220 family.</text>
</comment>
<sequence>MSGFLEGSRCSECMDWGEKRNTIASIAAGVLFFTGWWIIIDAAVMYPRMDQFNHSYHTCGVIATIAFLMINAVSNGQVRGDSYSEGCLGQTGARIWLFIGFMLAFGSLIASMWILFGGYVAKEKDVVYPGIAVFFQNAFIFFGGLVFKFGRTEDLWQ</sequence>
<reference key="1">
    <citation type="journal article" date="2002" name="Gene">
        <title>Entire sequence of a mouse chromosomal segment containing the gene Rhced and a comparative analysis of the homologous human sequence.</title>
        <authorList>
            <person name="Kumada M."/>
            <person name="Iwamoto S."/>
            <person name="Kamesaki T."/>
            <person name="Okuda H."/>
            <person name="Kajii E."/>
        </authorList>
    </citation>
    <scope>NUCLEOTIDE SEQUENCE [GENOMIC DNA]</scope>
</reference>
<reference key="2">
    <citation type="journal article" date="2005" name="Science">
        <title>The transcriptional landscape of the mammalian genome.</title>
        <authorList>
            <person name="Carninci P."/>
            <person name="Kasukawa T."/>
            <person name="Katayama S."/>
            <person name="Gough J."/>
            <person name="Frith M.C."/>
            <person name="Maeda N."/>
            <person name="Oyama R."/>
            <person name="Ravasi T."/>
            <person name="Lenhard B."/>
            <person name="Wells C."/>
            <person name="Kodzius R."/>
            <person name="Shimokawa K."/>
            <person name="Bajic V.B."/>
            <person name="Brenner S.E."/>
            <person name="Batalov S."/>
            <person name="Forrest A.R."/>
            <person name="Zavolan M."/>
            <person name="Davis M.J."/>
            <person name="Wilming L.G."/>
            <person name="Aidinis V."/>
            <person name="Allen J.E."/>
            <person name="Ambesi-Impiombato A."/>
            <person name="Apweiler R."/>
            <person name="Aturaliya R.N."/>
            <person name="Bailey T.L."/>
            <person name="Bansal M."/>
            <person name="Baxter L."/>
            <person name="Beisel K.W."/>
            <person name="Bersano T."/>
            <person name="Bono H."/>
            <person name="Chalk A.M."/>
            <person name="Chiu K.P."/>
            <person name="Choudhary V."/>
            <person name="Christoffels A."/>
            <person name="Clutterbuck D.R."/>
            <person name="Crowe M.L."/>
            <person name="Dalla E."/>
            <person name="Dalrymple B.P."/>
            <person name="de Bono B."/>
            <person name="Della Gatta G."/>
            <person name="di Bernardo D."/>
            <person name="Down T."/>
            <person name="Engstrom P."/>
            <person name="Fagiolini M."/>
            <person name="Faulkner G."/>
            <person name="Fletcher C.F."/>
            <person name="Fukushima T."/>
            <person name="Furuno M."/>
            <person name="Futaki S."/>
            <person name="Gariboldi M."/>
            <person name="Georgii-Hemming P."/>
            <person name="Gingeras T.R."/>
            <person name="Gojobori T."/>
            <person name="Green R.E."/>
            <person name="Gustincich S."/>
            <person name="Harbers M."/>
            <person name="Hayashi Y."/>
            <person name="Hensch T.K."/>
            <person name="Hirokawa N."/>
            <person name="Hill D."/>
            <person name="Huminiecki L."/>
            <person name="Iacono M."/>
            <person name="Ikeo K."/>
            <person name="Iwama A."/>
            <person name="Ishikawa T."/>
            <person name="Jakt M."/>
            <person name="Kanapin A."/>
            <person name="Katoh M."/>
            <person name="Kawasawa Y."/>
            <person name="Kelso J."/>
            <person name="Kitamura H."/>
            <person name="Kitano H."/>
            <person name="Kollias G."/>
            <person name="Krishnan S.P."/>
            <person name="Kruger A."/>
            <person name="Kummerfeld S.K."/>
            <person name="Kurochkin I.V."/>
            <person name="Lareau L.F."/>
            <person name="Lazarevic D."/>
            <person name="Lipovich L."/>
            <person name="Liu J."/>
            <person name="Liuni S."/>
            <person name="McWilliam S."/>
            <person name="Madan Babu M."/>
            <person name="Madera M."/>
            <person name="Marchionni L."/>
            <person name="Matsuda H."/>
            <person name="Matsuzawa S."/>
            <person name="Miki H."/>
            <person name="Mignone F."/>
            <person name="Miyake S."/>
            <person name="Morris K."/>
            <person name="Mottagui-Tabar S."/>
            <person name="Mulder N."/>
            <person name="Nakano N."/>
            <person name="Nakauchi H."/>
            <person name="Ng P."/>
            <person name="Nilsson R."/>
            <person name="Nishiguchi S."/>
            <person name="Nishikawa S."/>
            <person name="Nori F."/>
            <person name="Ohara O."/>
            <person name="Okazaki Y."/>
            <person name="Orlando V."/>
            <person name="Pang K.C."/>
            <person name="Pavan W.J."/>
            <person name="Pavesi G."/>
            <person name="Pesole G."/>
            <person name="Petrovsky N."/>
            <person name="Piazza S."/>
            <person name="Reed J."/>
            <person name="Reid J.F."/>
            <person name="Ring B.Z."/>
            <person name="Ringwald M."/>
            <person name="Rost B."/>
            <person name="Ruan Y."/>
            <person name="Salzberg S.L."/>
            <person name="Sandelin A."/>
            <person name="Schneider C."/>
            <person name="Schoenbach C."/>
            <person name="Sekiguchi K."/>
            <person name="Semple C.A."/>
            <person name="Seno S."/>
            <person name="Sessa L."/>
            <person name="Sheng Y."/>
            <person name="Shibata Y."/>
            <person name="Shimada H."/>
            <person name="Shimada K."/>
            <person name="Silva D."/>
            <person name="Sinclair B."/>
            <person name="Sperling S."/>
            <person name="Stupka E."/>
            <person name="Sugiura K."/>
            <person name="Sultana R."/>
            <person name="Takenaka Y."/>
            <person name="Taki K."/>
            <person name="Tammoja K."/>
            <person name="Tan S.L."/>
            <person name="Tang S."/>
            <person name="Taylor M.S."/>
            <person name="Tegner J."/>
            <person name="Teichmann S.A."/>
            <person name="Ueda H.R."/>
            <person name="van Nimwegen E."/>
            <person name="Verardo R."/>
            <person name="Wei C.L."/>
            <person name="Yagi K."/>
            <person name="Yamanishi H."/>
            <person name="Zabarovsky E."/>
            <person name="Zhu S."/>
            <person name="Zimmer A."/>
            <person name="Hide W."/>
            <person name="Bult C."/>
            <person name="Grimmond S.M."/>
            <person name="Teasdale R.D."/>
            <person name="Liu E.T."/>
            <person name="Brusic V."/>
            <person name="Quackenbush J."/>
            <person name="Wahlestedt C."/>
            <person name="Mattick J.S."/>
            <person name="Hume D.A."/>
            <person name="Kai C."/>
            <person name="Sasaki D."/>
            <person name="Tomaru Y."/>
            <person name="Fukuda S."/>
            <person name="Kanamori-Katayama M."/>
            <person name="Suzuki M."/>
            <person name="Aoki J."/>
            <person name="Arakawa T."/>
            <person name="Iida J."/>
            <person name="Imamura K."/>
            <person name="Itoh M."/>
            <person name="Kato T."/>
            <person name="Kawaji H."/>
            <person name="Kawagashira N."/>
            <person name="Kawashima T."/>
            <person name="Kojima M."/>
            <person name="Kondo S."/>
            <person name="Konno H."/>
            <person name="Nakano K."/>
            <person name="Ninomiya N."/>
            <person name="Nishio T."/>
            <person name="Okada M."/>
            <person name="Plessy C."/>
            <person name="Shibata K."/>
            <person name="Shiraki T."/>
            <person name="Suzuki S."/>
            <person name="Tagami M."/>
            <person name="Waki K."/>
            <person name="Watahiki A."/>
            <person name="Okamura-Oho Y."/>
            <person name="Suzuki H."/>
            <person name="Kawai J."/>
            <person name="Hayashizaki Y."/>
        </authorList>
    </citation>
    <scope>NUCLEOTIDE SEQUENCE [LARGE SCALE MRNA]</scope>
    <source>
        <strain>C57BL/6J</strain>
        <tissue>Embryonic head</tissue>
    </source>
</reference>
<reference key="3">
    <citation type="journal article" date="2010" name="Cell">
        <title>A tissue-specific atlas of mouse protein phosphorylation and expression.</title>
        <authorList>
            <person name="Huttlin E.L."/>
            <person name="Jedrychowski M.P."/>
            <person name="Elias J.E."/>
            <person name="Goswami T."/>
            <person name="Rad R."/>
            <person name="Beausoleil S.A."/>
            <person name="Villen J."/>
            <person name="Haas W."/>
            <person name="Sowa M.E."/>
            <person name="Gygi S.P."/>
        </authorList>
    </citation>
    <scope>IDENTIFICATION BY MASS SPECTROMETRY [LARGE SCALE ANALYSIS]</scope>
    <source>
        <tissue>Heart</tissue>
        <tissue>Lung</tissue>
    </source>
</reference>
<proteinExistence type="evidence at protein level"/>
<dbReference type="EMBL" id="AB076248">
    <property type="protein sequence ID" value="BAC21152.1"/>
    <property type="molecule type" value="Genomic_DNA"/>
</dbReference>
<dbReference type="EMBL" id="AK014282">
    <property type="protein sequence ID" value="BAB29242.1"/>
    <property type="molecule type" value="mRNA"/>
</dbReference>
<dbReference type="CCDS" id="CCDS18779.1"/>
<dbReference type="RefSeq" id="NP_001406138.1">
    <property type="nucleotide sequence ID" value="NM_001419209.1"/>
</dbReference>
<dbReference type="RefSeq" id="NP_082211.1">
    <property type="nucleotide sequence ID" value="NM_027935.3"/>
</dbReference>
<dbReference type="RefSeq" id="XP_006539244.1">
    <property type="nucleotide sequence ID" value="XM_006539181.2"/>
</dbReference>
<dbReference type="FunCoup" id="Q9CXL1">
    <property type="interactions" value="997"/>
</dbReference>
<dbReference type="STRING" id="10090.ENSMUSP00000030626"/>
<dbReference type="PhosphoSitePlus" id="Q9CXL1"/>
<dbReference type="SwissPalm" id="Q9CXL1"/>
<dbReference type="PaxDb" id="10090-ENSMUSP00000030626"/>
<dbReference type="ProteomicsDB" id="262831"/>
<dbReference type="Pumba" id="Q9CXL1"/>
<dbReference type="Antibodypedia" id="77930">
    <property type="antibodies" value="5 antibodies from 5 providers"/>
</dbReference>
<dbReference type="DNASU" id="71817"/>
<dbReference type="Ensembl" id="ENSMUST00000030626.12">
    <property type="protein sequence ID" value="ENSMUSP00000030626.6"/>
    <property type="gene ID" value="ENSMUSG00000028822.12"/>
</dbReference>
<dbReference type="Ensembl" id="ENSMUST00000105863.2">
    <property type="protein sequence ID" value="ENSMUSP00000101489.2"/>
    <property type="gene ID" value="ENSMUSG00000028822.12"/>
</dbReference>
<dbReference type="GeneID" id="71817"/>
<dbReference type="KEGG" id="mmu:71817"/>
<dbReference type="UCSC" id="uc008vfv.1">
    <property type="organism name" value="mouse"/>
</dbReference>
<dbReference type="AGR" id="MGI:1919067"/>
<dbReference type="CTD" id="23585"/>
<dbReference type="MGI" id="MGI:1919067">
    <property type="gene designation" value="Tmem50a"/>
</dbReference>
<dbReference type="VEuPathDB" id="HostDB:ENSMUSG00000028822"/>
<dbReference type="eggNOG" id="KOG3393">
    <property type="taxonomic scope" value="Eukaryota"/>
</dbReference>
<dbReference type="GeneTree" id="ENSGT00940000157715"/>
<dbReference type="HOGENOM" id="CLU_096876_1_0_1"/>
<dbReference type="InParanoid" id="Q9CXL1"/>
<dbReference type="OMA" id="GYVVPQK"/>
<dbReference type="OrthoDB" id="268928at2759"/>
<dbReference type="PhylomeDB" id="Q9CXL1"/>
<dbReference type="TreeFam" id="TF300282"/>
<dbReference type="BioGRID-ORCS" id="71817">
    <property type="hits" value="3 hits in 77 CRISPR screens"/>
</dbReference>
<dbReference type="ChiTaRS" id="Tmem50a">
    <property type="organism name" value="mouse"/>
</dbReference>
<dbReference type="PRO" id="PR:Q9CXL1"/>
<dbReference type="Proteomes" id="UP000000589">
    <property type="component" value="Chromosome 4"/>
</dbReference>
<dbReference type="RNAct" id="Q9CXL1">
    <property type="molecule type" value="protein"/>
</dbReference>
<dbReference type="Bgee" id="ENSMUSG00000028822">
    <property type="expression patterns" value="Expressed in adrenal gland and 225 other cell types or tissues"/>
</dbReference>
<dbReference type="ExpressionAtlas" id="Q9CXL1">
    <property type="expression patterns" value="baseline and differential"/>
</dbReference>
<dbReference type="GO" id="GO:0005737">
    <property type="term" value="C:cytoplasm"/>
    <property type="evidence" value="ECO:0000314"/>
    <property type="project" value="MGI"/>
</dbReference>
<dbReference type="GO" id="GO:0005783">
    <property type="term" value="C:endoplasmic reticulum"/>
    <property type="evidence" value="ECO:0007669"/>
    <property type="project" value="Ensembl"/>
</dbReference>
<dbReference type="GO" id="GO:0097386">
    <property type="term" value="C:glial cell projection"/>
    <property type="evidence" value="ECO:0000314"/>
    <property type="project" value="MGI"/>
</dbReference>
<dbReference type="GO" id="GO:0016020">
    <property type="term" value="C:membrane"/>
    <property type="evidence" value="ECO:0007669"/>
    <property type="project" value="UniProtKB-SubCell"/>
</dbReference>
<dbReference type="GO" id="GO:0043025">
    <property type="term" value="C:neuronal cell body"/>
    <property type="evidence" value="ECO:0000314"/>
    <property type="project" value="MGI"/>
</dbReference>
<dbReference type="InterPro" id="IPR007919">
    <property type="entry name" value="UPF0220"/>
</dbReference>
<dbReference type="PANTHER" id="PTHR13180">
    <property type="entry name" value="SMALL MEMBRANE PROTEIN-RELATED"/>
    <property type="match status" value="1"/>
</dbReference>
<dbReference type="Pfam" id="PF05255">
    <property type="entry name" value="UPF0220"/>
    <property type="match status" value="1"/>
</dbReference>
<gene>
    <name type="primary">Tmem50a</name>
    <name type="synonym">Smp1</name>
</gene>
<protein>
    <recommendedName>
        <fullName>Transmembrane protein 50A</fullName>
    </recommendedName>
    <alternativeName>
        <fullName>Small membrane protein 1</fullName>
    </alternativeName>
</protein>